<protein>
    <recommendedName>
        <fullName evidence="1">NADH-quinone oxidoreductase subunit A</fullName>
        <ecNumber evidence="1">7.1.1.-</ecNumber>
    </recommendedName>
    <alternativeName>
        <fullName evidence="1">NADH dehydrogenase I subunit A</fullName>
    </alternativeName>
    <alternativeName>
        <fullName evidence="1">NDH-1 subunit A</fullName>
    </alternativeName>
    <alternativeName>
        <fullName evidence="1">NUO1</fullName>
    </alternativeName>
</protein>
<proteinExistence type="inferred from homology"/>
<sequence length="118" mass="13397">MLTNYAFIGIFALAAITFPLLPLVLSAFLRPNRPTPVKLSTYECGLEAIGDIWVQFKVQYYLYALAFVIFDIETVFLYPWAVAYGQLGLFALFEMVVFLAILTIGLVYAWKKGALEWI</sequence>
<reference key="1">
    <citation type="journal article" date="2011" name="Stand. Genomic Sci.">
        <title>Complete genome sequence of the filamentous gliding predatory bacterium Herpetosiphon aurantiacus type strain (114-95(T)).</title>
        <authorList>
            <person name="Kiss H."/>
            <person name="Nett M."/>
            <person name="Domin N."/>
            <person name="Martin K."/>
            <person name="Maresca J.A."/>
            <person name="Copeland A."/>
            <person name="Lapidus A."/>
            <person name="Lucas S."/>
            <person name="Berry K.W."/>
            <person name="Glavina Del Rio T."/>
            <person name="Dalin E."/>
            <person name="Tice H."/>
            <person name="Pitluck S."/>
            <person name="Richardson P."/>
            <person name="Bruce D."/>
            <person name="Goodwin L."/>
            <person name="Han C."/>
            <person name="Detter J.C."/>
            <person name="Schmutz J."/>
            <person name="Brettin T."/>
            <person name="Land M."/>
            <person name="Hauser L."/>
            <person name="Kyrpides N.C."/>
            <person name="Ivanova N."/>
            <person name="Goeker M."/>
            <person name="Woyke T."/>
            <person name="Klenk H.P."/>
            <person name="Bryant D.A."/>
        </authorList>
    </citation>
    <scope>NUCLEOTIDE SEQUENCE [LARGE SCALE GENOMIC DNA]</scope>
    <source>
        <strain>ATCC 23779 / DSM 785 / 114-95</strain>
    </source>
</reference>
<keyword id="KW-1003">Cell membrane</keyword>
<keyword id="KW-0472">Membrane</keyword>
<keyword id="KW-0520">NAD</keyword>
<keyword id="KW-0874">Quinone</keyword>
<keyword id="KW-1278">Translocase</keyword>
<keyword id="KW-0812">Transmembrane</keyword>
<keyword id="KW-1133">Transmembrane helix</keyword>
<keyword id="KW-0813">Transport</keyword>
<keyword id="KW-0830">Ubiquinone</keyword>
<evidence type="ECO:0000255" key="1">
    <source>
        <dbReference type="HAMAP-Rule" id="MF_01394"/>
    </source>
</evidence>
<gene>
    <name evidence="1" type="primary">nuoA</name>
    <name type="ordered locus">Haur_4980</name>
</gene>
<name>NUOA_HERA2</name>
<dbReference type="EC" id="7.1.1.-" evidence="1"/>
<dbReference type="EMBL" id="CP000875">
    <property type="protein sequence ID" value="ABX07610.1"/>
    <property type="molecule type" value="Genomic_DNA"/>
</dbReference>
<dbReference type="SMR" id="A9B477"/>
<dbReference type="STRING" id="316274.Haur_4980"/>
<dbReference type="KEGG" id="hau:Haur_4980"/>
<dbReference type="eggNOG" id="COG0838">
    <property type="taxonomic scope" value="Bacteria"/>
</dbReference>
<dbReference type="HOGENOM" id="CLU_119549_1_1_0"/>
<dbReference type="InParanoid" id="A9B477"/>
<dbReference type="Proteomes" id="UP000000787">
    <property type="component" value="Chromosome"/>
</dbReference>
<dbReference type="GO" id="GO:0030964">
    <property type="term" value="C:NADH dehydrogenase complex"/>
    <property type="evidence" value="ECO:0007669"/>
    <property type="project" value="TreeGrafter"/>
</dbReference>
<dbReference type="GO" id="GO:0005886">
    <property type="term" value="C:plasma membrane"/>
    <property type="evidence" value="ECO:0007669"/>
    <property type="project" value="UniProtKB-SubCell"/>
</dbReference>
<dbReference type="GO" id="GO:0008137">
    <property type="term" value="F:NADH dehydrogenase (ubiquinone) activity"/>
    <property type="evidence" value="ECO:0007669"/>
    <property type="project" value="InterPro"/>
</dbReference>
<dbReference type="GO" id="GO:0050136">
    <property type="term" value="F:NADH:ubiquinone reductase (non-electrogenic) activity"/>
    <property type="evidence" value="ECO:0007669"/>
    <property type="project" value="UniProtKB-UniRule"/>
</dbReference>
<dbReference type="GO" id="GO:0048038">
    <property type="term" value="F:quinone binding"/>
    <property type="evidence" value="ECO:0007669"/>
    <property type="project" value="UniProtKB-KW"/>
</dbReference>
<dbReference type="Gene3D" id="1.20.58.1610">
    <property type="entry name" value="NADH:ubiquinone/plastoquinone oxidoreductase, chain 3"/>
    <property type="match status" value="1"/>
</dbReference>
<dbReference type="HAMAP" id="MF_01394">
    <property type="entry name" value="NDH1_NuoA"/>
    <property type="match status" value="1"/>
</dbReference>
<dbReference type="InterPro" id="IPR023043">
    <property type="entry name" value="NAD(P)H_OxRDtase_bac/plastid"/>
</dbReference>
<dbReference type="InterPro" id="IPR000440">
    <property type="entry name" value="NADH_UbQ/plastoQ_OxRdtase_su3"/>
</dbReference>
<dbReference type="InterPro" id="IPR038430">
    <property type="entry name" value="NDAH_ubi_oxred_su3_sf"/>
</dbReference>
<dbReference type="PANTHER" id="PTHR11058">
    <property type="entry name" value="NADH-UBIQUINONE OXIDOREDUCTASE CHAIN 3"/>
    <property type="match status" value="1"/>
</dbReference>
<dbReference type="PANTHER" id="PTHR11058:SF9">
    <property type="entry name" value="NADH-UBIQUINONE OXIDOREDUCTASE CHAIN 3"/>
    <property type="match status" value="1"/>
</dbReference>
<dbReference type="Pfam" id="PF00507">
    <property type="entry name" value="Oxidored_q4"/>
    <property type="match status" value="1"/>
</dbReference>
<comment type="function">
    <text evidence="1">NDH-1 shuttles electrons from NADH, via FMN and iron-sulfur (Fe-S) centers, to quinones in the respiratory chain. The immediate electron acceptor for the enzyme in this species is believed to be ubiquinone. Couples the redox reaction to proton translocation (for every two electrons transferred, four hydrogen ions are translocated across the cytoplasmic membrane), and thus conserves the redox energy in a proton gradient.</text>
</comment>
<comment type="catalytic activity">
    <reaction evidence="1">
        <text>a quinone + NADH + 5 H(+)(in) = a quinol + NAD(+) + 4 H(+)(out)</text>
        <dbReference type="Rhea" id="RHEA:57888"/>
        <dbReference type="ChEBI" id="CHEBI:15378"/>
        <dbReference type="ChEBI" id="CHEBI:24646"/>
        <dbReference type="ChEBI" id="CHEBI:57540"/>
        <dbReference type="ChEBI" id="CHEBI:57945"/>
        <dbReference type="ChEBI" id="CHEBI:132124"/>
    </reaction>
</comment>
<comment type="subunit">
    <text evidence="1">NDH-1 is composed of 14 different subunits. Subunits NuoA, H, J, K, L, M, N constitute the membrane sector of the complex.</text>
</comment>
<comment type="subcellular location">
    <subcellularLocation>
        <location evidence="1">Cell membrane</location>
        <topology evidence="1">Multi-pass membrane protein</topology>
    </subcellularLocation>
</comment>
<comment type="similarity">
    <text evidence="1">Belongs to the complex I subunit 3 family.</text>
</comment>
<feature type="chain" id="PRO_5000286513" description="NADH-quinone oxidoreductase subunit A">
    <location>
        <begin position="1"/>
        <end position="118"/>
    </location>
</feature>
<feature type="transmembrane region" description="Helical" evidence="1">
    <location>
        <begin position="5"/>
        <end position="25"/>
    </location>
</feature>
<feature type="transmembrane region" description="Helical" evidence="1">
    <location>
        <begin position="62"/>
        <end position="82"/>
    </location>
</feature>
<feature type="transmembrane region" description="Helical" evidence="1">
    <location>
        <begin position="87"/>
        <end position="107"/>
    </location>
</feature>
<organism>
    <name type="scientific">Herpetosiphon aurantiacus (strain ATCC 23779 / DSM 785 / 114-95)</name>
    <dbReference type="NCBI Taxonomy" id="316274"/>
    <lineage>
        <taxon>Bacteria</taxon>
        <taxon>Bacillati</taxon>
        <taxon>Chloroflexota</taxon>
        <taxon>Chloroflexia</taxon>
        <taxon>Herpetosiphonales</taxon>
        <taxon>Herpetosiphonaceae</taxon>
        <taxon>Herpetosiphon</taxon>
    </lineage>
</organism>
<accession>A9B477</accession>